<gene>
    <name evidence="5" type="primary">rpl-11.1</name>
    <name evidence="5" type="ORF">T22F3.4</name>
</gene>
<keyword id="KW-0963">Cytoplasm</keyword>
<keyword id="KW-0539">Nucleus</keyword>
<keyword id="KW-1185">Reference proteome</keyword>
<keyword id="KW-0687">Ribonucleoprotein</keyword>
<keyword id="KW-0689">Ribosomal protein</keyword>
<keyword id="KW-0694">RNA-binding</keyword>
<keyword id="KW-0699">rRNA-binding</keyword>
<proteinExistence type="inferred from homology"/>
<protein>
    <recommendedName>
        <fullName evidence="3">Large ribosomal subunit protein uL5A</fullName>
    </recommendedName>
    <alternativeName>
        <fullName evidence="3">60S ribosomal protein L11-1</fullName>
    </alternativeName>
</protein>
<name>RL111_CAEEL</name>
<sequence length="196" mass="22714">MTDVEKQTEIREKKGRNVMRELKIQKLCLNICVGESGDRLTRAAKVLEQLTGQTPVFSKARYTVRTFGIRRNEKIAVHCTVRGPKAEEILEKGLKVKEYELFKENFSDTGNFGFGVQEHIDLGIKYDPGIGIYGMDFYVVLNRNGVRVSKRRRAPGRIGPSHRVDKEETIKWFQQKYDGIILPPKPKVKKNFFRRR</sequence>
<feature type="chain" id="PRO_0000125087" description="Large ribosomal subunit protein uL5A" evidence="3">
    <location>
        <begin position="1"/>
        <end position="196"/>
    </location>
</feature>
<organism>
    <name type="scientific">Caenorhabditis elegans</name>
    <dbReference type="NCBI Taxonomy" id="6239"/>
    <lineage>
        <taxon>Eukaryota</taxon>
        <taxon>Metazoa</taxon>
        <taxon>Ecdysozoa</taxon>
        <taxon>Nematoda</taxon>
        <taxon>Chromadorea</taxon>
        <taxon>Rhabditida</taxon>
        <taxon>Rhabditina</taxon>
        <taxon>Rhabditomorpha</taxon>
        <taxon>Rhabditoidea</taxon>
        <taxon>Rhabditidae</taxon>
        <taxon>Peloderinae</taxon>
        <taxon>Caenorhabditis</taxon>
    </lineage>
</organism>
<accession>Q94300</accession>
<dbReference type="EMBL" id="FO081343">
    <property type="protein sequence ID" value="CCD70900.1"/>
    <property type="molecule type" value="Genomic_DNA"/>
</dbReference>
<dbReference type="PIR" id="T30978">
    <property type="entry name" value="T30978"/>
</dbReference>
<dbReference type="RefSeq" id="NP_504008.1">
    <property type="nucleotide sequence ID" value="NM_071607.7"/>
</dbReference>
<dbReference type="SMR" id="Q94300"/>
<dbReference type="BioGRID" id="43834">
    <property type="interactions" value="13"/>
</dbReference>
<dbReference type="DIP" id="DIP-25364N"/>
<dbReference type="FunCoup" id="Q94300">
    <property type="interactions" value="1702"/>
</dbReference>
<dbReference type="STRING" id="6239.T22F3.4a.1"/>
<dbReference type="PaxDb" id="6239-T22F3.4"/>
<dbReference type="PeptideAtlas" id="Q94300"/>
<dbReference type="EnsemblMetazoa" id="T22F3.4a.1">
    <property type="protein sequence ID" value="T22F3.4a.1"/>
    <property type="gene ID" value="WBGene00004422"/>
</dbReference>
<dbReference type="GeneID" id="178778"/>
<dbReference type="KEGG" id="cel:CELE_T22F3.4"/>
<dbReference type="UCSC" id="T22F3.4.1">
    <property type="organism name" value="c. elegans"/>
</dbReference>
<dbReference type="AGR" id="WB:WBGene00004422"/>
<dbReference type="CTD" id="178778"/>
<dbReference type="WormBase" id="T22F3.4a">
    <property type="protein sequence ID" value="CE13968"/>
    <property type="gene ID" value="WBGene00004422"/>
    <property type="gene designation" value="rpl-11.1"/>
</dbReference>
<dbReference type="eggNOG" id="KOG0397">
    <property type="taxonomic scope" value="Eukaryota"/>
</dbReference>
<dbReference type="GeneTree" id="ENSGT00910000144211"/>
<dbReference type="HOGENOM" id="CLU_061015_3_0_1"/>
<dbReference type="InParanoid" id="Q94300"/>
<dbReference type="OMA" id="MDFYCIM"/>
<dbReference type="OrthoDB" id="1734943at2759"/>
<dbReference type="PhylomeDB" id="Q94300"/>
<dbReference type="PRO" id="PR:Q94300"/>
<dbReference type="Proteomes" id="UP000001940">
    <property type="component" value="Chromosome V"/>
</dbReference>
<dbReference type="Bgee" id="WBGene00004422">
    <property type="expression patterns" value="Expressed in germ line (C elegans) and 4 other cell types or tissues"/>
</dbReference>
<dbReference type="ExpressionAtlas" id="Q94300">
    <property type="expression patterns" value="baseline and differential"/>
</dbReference>
<dbReference type="GO" id="GO:0022625">
    <property type="term" value="C:cytosolic large ribosomal subunit"/>
    <property type="evidence" value="ECO:0000318"/>
    <property type="project" value="GO_Central"/>
</dbReference>
<dbReference type="GO" id="GO:0005634">
    <property type="term" value="C:nucleus"/>
    <property type="evidence" value="ECO:0007669"/>
    <property type="project" value="UniProtKB-SubCell"/>
</dbReference>
<dbReference type="GO" id="GO:0003723">
    <property type="term" value="F:RNA binding"/>
    <property type="evidence" value="ECO:0000318"/>
    <property type="project" value="GO_Central"/>
</dbReference>
<dbReference type="GO" id="GO:0019843">
    <property type="term" value="F:rRNA binding"/>
    <property type="evidence" value="ECO:0007669"/>
    <property type="project" value="UniProtKB-KW"/>
</dbReference>
<dbReference type="GO" id="GO:0003735">
    <property type="term" value="F:structural constituent of ribosome"/>
    <property type="evidence" value="ECO:0000318"/>
    <property type="project" value="GO_Central"/>
</dbReference>
<dbReference type="GO" id="GO:0006412">
    <property type="term" value="P:translation"/>
    <property type="evidence" value="ECO:0000318"/>
    <property type="project" value="GO_Central"/>
</dbReference>
<dbReference type="FunFam" id="3.30.1440.10:FF:000004">
    <property type="entry name" value="60S ribosomal protein L11, putative"/>
    <property type="match status" value="1"/>
</dbReference>
<dbReference type="Gene3D" id="3.30.1440.10">
    <property type="match status" value="1"/>
</dbReference>
<dbReference type="InterPro" id="IPR002132">
    <property type="entry name" value="Ribosomal_uL5"/>
</dbReference>
<dbReference type="InterPro" id="IPR031309">
    <property type="entry name" value="Ribosomal_uL5_C"/>
</dbReference>
<dbReference type="InterPro" id="IPR020929">
    <property type="entry name" value="Ribosomal_uL5_CS"/>
</dbReference>
<dbReference type="InterPro" id="IPR022803">
    <property type="entry name" value="Ribosomal_uL5_dom_sf"/>
</dbReference>
<dbReference type="InterPro" id="IPR031310">
    <property type="entry name" value="Ribosomal_uL5_N"/>
</dbReference>
<dbReference type="NCBIfam" id="NF003258">
    <property type="entry name" value="PRK04219.1"/>
    <property type="match status" value="1"/>
</dbReference>
<dbReference type="PANTHER" id="PTHR11994">
    <property type="entry name" value="60S RIBOSOMAL PROTEIN L11-RELATED"/>
    <property type="match status" value="1"/>
</dbReference>
<dbReference type="Pfam" id="PF00281">
    <property type="entry name" value="Ribosomal_L5"/>
    <property type="match status" value="1"/>
</dbReference>
<dbReference type="Pfam" id="PF00673">
    <property type="entry name" value="Ribosomal_L5_C"/>
    <property type="match status" value="1"/>
</dbReference>
<dbReference type="PIRSF" id="PIRSF002161">
    <property type="entry name" value="Ribosomal_L5"/>
    <property type="match status" value="1"/>
</dbReference>
<dbReference type="SUPFAM" id="SSF55282">
    <property type="entry name" value="RL5-like"/>
    <property type="match status" value="1"/>
</dbReference>
<dbReference type="PROSITE" id="PS00358">
    <property type="entry name" value="RIBOSOMAL_L5"/>
    <property type="match status" value="1"/>
</dbReference>
<evidence type="ECO:0000250" key="1">
    <source>
        <dbReference type="UniProtKB" id="P0C0W9"/>
    </source>
</evidence>
<evidence type="ECO:0000269" key="2">
    <source>
    </source>
</evidence>
<evidence type="ECO:0000305" key="3"/>
<evidence type="ECO:0000305" key="4">
    <source>
    </source>
</evidence>
<evidence type="ECO:0000312" key="5">
    <source>
        <dbReference type="WormBase" id="T22F3.4a"/>
    </source>
</evidence>
<comment type="function">
    <text evidence="1">Component of the ribosome, a large ribonucleoprotein complex responsible for the synthesis of proteins in the cell. The small ribosomal subunit (SSU) binds messenger RNAs (mRNAs) and translates the encoded message by selecting cognate aminoacyl-transfer RNA (tRNA) molecules. The large subunit (LSU) contains the ribosomal catalytic site termed the peptidyl transferase center (PTC), which catalyzes the formation of peptide bonds, thereby polymerizing the amino acids delivered by tRNAs into a polypeptide chain. The nascent polypeptides leave the ribosome through a tunnel in the LSU and interact with protein factors that function in enzymatic processing, targeting, and the membrane insertion of nascent chains at the exit of the ribosomal tunnel.</text>
</comment>
<comment type="subunit">
    <text evidence="1">Component of the large ribosomal subunit.</text>
</comment>
<comment type="subcellular location">
    <subcellularLocation>
        <location evidence="1">Nucleus</location>
    </subcellularLocation>
    <subcellularLocation>
        <location evidence="1">Cytoplasm</location>
    </subcellularLocation>
</comment>
<comment type="disruption phenotype">
    <text evidence="2">Mutants have an extended lifespan, increased volume and are sterile with a germ cell proliferation defect.</text>
</comment>
<comment type="miscellaneous">
    <text evidence="4">There's a functional difference between the two L11-encoding proteins in C.elegans. rpl-11.1 plays a role in the germline whereas rpl-11.2 has a somatic function.</text>
</comment>
<comment type="similarity">
    <text evidence="3">Belongs to the universal ribosomal protein uL5 family.</text>
</comment>
<reference key="1">
    <citation type="journal article" date="1998" name="Science">
        <title>Genome sequence of the nematode C. elegans: a platform for investigating biology.</title>
        <authorList>
            <consortium name="The C. elegans sequencing consortium"/>
        </authorList>
    </citation>
    <scope>NUCLEOTIDE SEQUENCE [LARGE SCALE GENOMIC DNA]</scope>
    <source>
        <strain>Bristol N2</strain>
    </source>
</reference>
<reference key="2">
    <citation type="journal article" date="2005" name="Genetics">
        <title>Autosomal genes of autosomal/X-linked duplicated gene pairs and germ-line proliferation in Caenorhabditis elegans.</title>
        <authorList>
            <person name="Maciejowski J."/>
            <person name="Ahn J.H."/>
            <person name="Cipriani P.G."/>
            <person name="Killian D.J."/>
            <person name="Chaudhary A.L."/>
            <person name="Lee J.I."/>
            <person name="Voutev R."/>
            <person name="Johnsen R.C."/>
            <person name="Baillie D.L."/>
            <person name="Gunsalus K.C."/>
            <person name="Fitch D.H."/>
            <person name="Hubbard E.J."/>
        </authorList>
    </citation>
    <scope>DISRUPTION PHENOTYPE</scope>
</reference>